<reference key="1">
    <citation type="journal article" date="2006" name="Appl. Environ. Microbiol.">
        <title>Genome sequence of the chemolithoautotrophic nitrite-oxidizing bacterium Nitrobacter winogradskyi Nb-255.</title>
        <authorList>
            <person name="Starkenburg S.R."/>
            <person name="Chain P.S.G."/>
            <person name="Sayavedra-Soto L.A."/>
            <person name="Hauser L."/>
            <person name="Land M.L."/>
            <person name="Larimer F.W."/>
            <person name="Malfatti S.A."/>
            <person name="Klotz M.G."/>
            <person name="Bottomley P.J."/>
            <person name="Arp D.J."/>
            <person name="Hickey W.J."/>
        </authorList>
    </citation>
    <scope>NUCLEOTIDE SEQUENCE [LARGE SCALE GENOMIC DNA]</scope>
    <source>
        <strain>ATCC 25391 / DSM 10237 / CIP 104748 / NCIMB 11846 / Nb-255</strain>
    </source>
</reference>
<sequence>MTTAPLILLAAGGTGGHLFPAEALGVELMKRGLRVRLVTDSRALRYSGLFSKDLTDVVPSETVRGRSPWALARTGLMLAAGTAVALNLMRVLKPAAVVGFGGYPTLPPLIAARLRGIPTVIHDSNAVMGRANSFLSKRVNAIATSLPGVLDKKPSLAGKITTTGTPMRPAILAAAAVPFATPGLGDPLRVLVVGGSQGARVMSDIVPGAIERLEPALRQRLILTQQVRDEDMARVRGFYDRLEIKAELAPFFADLPARLASNHIIISRSGAGTVAELGAIGRPSILVPLPGAIDQDQFANAGVLADVGGAIRIVQPDFTPDRLAAELSALAAGPARLAAMATAARTVGRLDAAGRLADLVMRVARTGA</sequence>
<keyword id="KW-0131">Cell cycle</keyword>
<keyword id="KW-0132">Cell division</keyword>
<keyword id="KW-0997">Cell inner membrane</keyword>
<keyword id="KW-1003">Cell membrane</keyword>
<keyword id="KW-0133">Cell shape</keyword>
<keyword id="KW-0961">Cell wall biogenesis/degradation</keyword>
<keyword id="KW-0328">Glycosyltransferase</keyword>
<keyword id="KW-0472">Membrane</keyword>
<keyword id="KW-0573">Peptidoglycan synthesis</keyword>
<keyword id="KW-1185">Reference proteome</keyword>
<keyword id="KW-0808">Transferase</keyword>
<dbReference type="EC" id="2.4.1.227" evidence="1"/>
<dbReference type="EMBL" id="CP000115">
    <property type="protein sequence ID" value="ABA04313.1"/>
    <property type="status" value="ALT_INIT"/>
    <property type="molecule type" value="Genomic_DNA"/>
</dbReference>
<dbReference type="RefSeq" id="WP_041345416.1">
    <property type="nucleotide sequence ID" value="NC_007406.1"/>
</dbReference>
<dbReference type="SMR" id="Q3STS8"/>
<dbReference type="STRING" id="323098.Nwi_1051"/>
<dbReference type="CAZy" id="GT28">
    <property type="family name" value="Glycosyltransferase Family 28"/>
</dbReference>
<dbReference type="KEGG" id="nwi:Nwi_1051"/>
<dbReference type="eggNOG" id="COG0707">
    <property type="taxonomic scope" value="Bacteria"/>
</dbReference>
<dbReference type="HOGENOM" id="CLU_037404_2_1_5"/>
<dbReference type="OrthoDB" id="9808936at2"/>
<dbReference type="UniPathway" id="UPA00219"/>
<dbReference type="Proteomes" id="UP000002531">
    <property type="component" value="Chromosome"/>
</dbReference>
<dbReference type="GO" id="GO:0005886">
    <property type="term" value="C:plasma membrane"/>
    <property type="evidence" value="ECO:0007669"/>
    <property type="project" value="UniProtKB-SubCell"/>
</dbReference>
<dbReference type="GO" id="GO:0051991">
    <property type="term" value="F:UDP-N-acetyl-D-glucosamine:N-acetylmuramoyl-L-alanyl-D-glutamyl-meso-2,6-diaminopimelyl-D-alanyl-D-alanine-diphosphoundecaprenol 4-beta-N-acetylglucosaminlytransferase activity"/>
    <property type="evidence" value="ECO:0007669"/>
    <property type="project" value="RHEA"/>
</dbReference>
<dbReference type="GO" id="GO:0050511">
    <property type="term" value="F:undecaprenyldiphospho-muramoylpentapeptide beta-N-acetylglucosaminyltransferase activity"/>
    <property type="evidence" value="ECO:0007669"/>
    <property type="project" value="UniProtKB-UniRule"/>
</dbReference>
<dbReference type="GO" id="GO:0005975">
    <property type="term" value="P:carbohydrate metabolic process"/>
    <property type="evidence" value="ECO:0007669"/>
    <property type="project" value="InterPro"/>
</dbReference>
<dbReference type="GO" id="GO:0051301">
    <property type="term" value="P:cell division"/>
    <property type="evidence" value="ECO:0007669"/>
    <property type="project" value="UniProtKB-KW"/>
</dbReference>
<dbReference type="GO" id="GO:0071555">
    <property type="term" value="P:cell wall organization"/>
    <property type="evidence" value="ECO:0007669"/>
    <property type="project" value="UniProtKB-KW"/>
</dbReference>
<dbReference type="GO" id="GO:0030259">
    <property type="term" value="P:lipid glycosylation"/>
    <property type="evidence" value="ECO:0007669"/>
    <property type="project" value="UniProtKB-UniRule"/>
</dbReference>
<dbReference type="GO" id="GO:0009252">
    <property type="term" value="P:peptidoglycan biosynthetic process"/>
    <property type="evidence" value="ECO:0007669"/>
    <property type="project" value="UniProtKB-UniRule"/>
</dbReference>
<dbReference type="GO" id="GO:0008360">
    <property type="term" value="P:regulation of cell shape"/>
    <property type="evidence" value="ECO:0007669"/>
    <property type="project" value="UniProtKB-KW"/>
</dbReference>
<dbReference type="CDD" id="cd03785">
    <property type="entry name" value="GT28_MurG"/>
    <property type="match status" value="1"/>
</dbReference>
<dbReference type="Gene3D" id="3.40.50.2000">
    <property type="entry name" value="Glycogen Phosphorylase B"/>
    <property type="match status" value="2"/>
</dbReference>
<dbReference type="HAMAP" id="MF_00033">
    <property type="entry name" value="MurG"/>
    <property type="match status" value="1"/>
</dbReference>
<dbReference type="InterPro" id="IPR006009">
    <property type="entry name" value="GlcNAc_MurG"/>
</dbReference>
<dbReference type="InterPro" id="IPR007235">
    <property type="entry name" value="Glyco_trans_28_C"/>
</dbReference>
<dbReference type="InterPro" id="IPR004276">
    <property type="entry name" value="GlycoTrans_28_N"/>
</dbReference>
<dbReference type="PANTHER" id="PTHR21015:SF22">
    <property type="entry name" value="GLYCOSYLTRANSFERASE"/>
    <property type="match status" value="1"/>
</dbReference>
<dbReference type="PANTHER" id="PTHR21015">
    <property type="entry name" value="UDP-N-ACETYLGLUCOSAMINE--N-ACETYLMURAMYL-(PENTAPEPTIDE) PYROPHOSPHORYL-UNDECAPRENOL N-ACETYLGLUCOSAMINE TRANSFERASE 1"/>
    <property type="match status" value="1"/>
</dbReference>
<dbReference type="Pfam" id="PF04101">
    <property type="entry name" value="Glyco_tran_28_C"/>
    <property type="match status" value="1"/>
</dbReference>
<dbReference type="Pfam" id="PF03033">
    <property type="entry name" value="Glyco_transf_28"/>
    <property type="match status" value="1"/>
</dbReference>
<dbReference type="SUPFAM" id="SSF53756">
    <property type="entry name" value="UDP-Glycosyltransferase/glycogen phosphorylase"/>
    <property type="match status" value="1"/>
</dbReference>
<accession>Q3STS8</accession>
<protein>
    <recommendedName>
        <fullName evidence="1">UDP-N-acetylglucosamine--N-acetylmuramyl-(pentapeptide) pyrophosphoryl-undecaprenol N-acetylglucosamine transferase</fullName>
        <ecNumber evidence="1">2.4.1.227</ecNumber>
    </recommendedName>
    <alternativeName>
        <fullName evidence="1">Undecaprenyl-PP-MurNAc-pentapeptide-UDPGlcNAc GlcNAc transferase</fullName>
    </alternativeName>
</protein>
<gene>
    <name evidence="1" type="primary">murG</name>
    <name type="ordered locus">Nwi_1051</name>
</gene>
<proteinExistence type="inferred from homology"/>
<feature type="chain" id="PRO_0000225070" description="UDP-N-acetylglucosamine--N-acetylmuramyl-(pentapeptide) pyrophosphoryl-undecaprenol N-acetylglucosamine transferase">
    <location>
        <begin position="1"/>
        <end position="368"/>
    </location>
</feature>
<feature type="binding site" evidence="1">
    <location>
        <begin position="14"/>
        <end position="16"/>
    </location>
    <ligand>
        <name>UDP-N-acetyl-alpha-D-glucosamine</name>
        <dbReference type="ChEBI" id="CHEBI:57705"/>
    </ligand>
</feature>
<feature type="binding site" evidence="1">
    <location>
        <position position="125"/>
    </location>
    <ligand>
        <name>UDP-N-acetyl-alpha-D-glucosamine</name>
        <dbReference type="ChEBI" id="CHEBI:57705"/>
    </ligand>
</feature>
<feature type="binding site" evidence="1">
    <location>
        <position position="168"/>
    </location>
    <ligand>
        <name>UDP-N-acetyl-alpha-D-glucosamine</name>
        <dbReference type="ChEBI" id="CHEBI:57705"/>
    </ligand>
</feature>
<feature type="binding site" evidence="1">
    <location>
        <position position="196"/>
    </location>
    <ligand>
        <name>UDP-N-acetyl-alpha-D-glucosamine</name>
        <dbReference type="ChEBI" id="CHEBI:57705"/>
    </ligand>
</feature>
<feature type="binding site" evidence="1">
    <location>
        <position position="297"/>
    </location>
    <ligand>
        <name>UDP-N-acetyl-alpha-D-glucosamine</name>
        <dbReference type="ChEBI" id="CHEBI:57705"/>
    </ligand>
</feature>
<evidence type="ECO:0000255" key="1">
    <source>
        <dbReference type="HAMAP-Rule" id="MF_00033"/>
    </source>
</evidence>
<evidence type="ECO:0000305" key="2"/>
<organism>
    <name type="scientific">Nitrobacter winogradskyi (strain ATCC 25391 / DSM 10237 / CIP 104748 / NCIMB 11846 / Nb-255)</name>
    <dbReference type="NCBI Taxonomy" id="323098"/>
    <lineage>
        <taxon>Bacteria</taxon>
        <taxon>Pseudomonadati</taxon>
        <taxon>Pseudomonadota</taxon>
        <taxon>Alphaproteobacteria</taxon>
        <taxon>Hyphomicrobiales</taxon>
        <taxon>Nitrobacteraceae</taxon>
        <taxon>Nitrobacter</taxon>
    </lineage>
</organism>
<name>MURG_NITWN</name>
<comment type="function">
    <text evidence="1">Cell wall formation. Catalyzes the transfer of a GlcNAc subunit on undecaprenyl-pyrophosphoryl-MurNAc-pentapeptide (lipid intermediate I) to form undecaprenyl-pyrophosphoryl-MurNAc-(pentapeptide)GlcNAc (lipid intermediate II).</text>
</comment>
<comment type="catalytic activity">
    <reaction evidence="1">
        <text>di-trans,octa-cis-undecaprenyl diphospho-N-acetyl-alpha-D-muramoyl-L-alanyl-D-glutamyl-meso-2,6-diaminopimeloyl-D-alanyl-D-alanine + UDP-N-acetyl-alpha-D-glucosamine = di-trans,octa-cis-undecaprenyl diphospho-[N-acetyl-alpha-D-glucosaminyl-(1-&gt;4)]-N-acetyl-alpha-D-muramoyl-L-alanyl-D-glutamyl-meso-2,6-diaminopimeloyl-D-alanyl-D-alanine + UDP + H(+)</text>
        <dbReference type="Rhea" id="RHEA:31227"/>
        <dbReference type="ChEBI" id="CHEBI:15378"/>
        <dbReference type="ChEBI" id="CHEBI:57705"/>
        <dbReference type="ChEBI" id="CHEBI:58223"/>
        <dbReference type="ChEBI" id="CHEBI:61387"/>
        <dbReference type="ChEBI" id="CHEBI:61388"/>
        <dbReference type="EC" id="2.4.1.227"/>
    </reaction>
</comment>
<comment type="pathway">
    <text evidence="1">Cell wall biogenesis; peptidoglycan biosynthesis.</text>
</comment>
<comment type="subcellular location">
    <subcellularLocation>
        <location evidence="1">Cell inner membrane</location>
        <topology evidence="1">Peripheral membrane protein</topology>
        <orientation evidence="1">Cytoplasmic side</orientation>
    </subcellularLocation>
</comment>
<comment type="similarity">
    <text evidence="1">Belongs to the glycosyltransferase 28 family. MurG subfamily.</text>
</comment>
<comment type="sequence caution" evidence="2">
    <conflict type="erroneous initiation">
        <sequence resource="EMBL-CDS" id="ABA04313"/>
    </conflict>
</comment>